<comment type="function">
    <text evidence="5 6 7 8">V region of the variable domain of immunoglobulin heavy chains that participates in the antigen recognition (PubMed:24600447). Immunoglobulins, also known as antibodies, are membrane-bound or secreted glycoproteins produced by B lymphocytes. In the recognition phase of humoral immunity, the membrane-bound immunoglobulins serve as receptors which, upon binding of a specific antigen, trigger the clonal expansion and differentiation of B lymphocytes into immunoglobulins-secreting plasma cells. Secreted immunoglobulins mediate the effector phase of humoral immunity, which results in the elimination of bound antigens (PubMed:20176268, PubMed:22158414). The antigen binding site is formed by the variable domain of one heavy chain, together with that of its associated light chain. Thus, each immunoglobulin has two antigen binding sites with remarkable affinity for a particular antigen. The variable domains are assembled by a process called V-(D)-J rearrangement and can then be subjected to somatic hypermutations which, after exposure to antigen and selection, allow affinity maturation for a particular antigen (PubMed:17576170, PubMed:20176268).</text>
</comment>
<comment type="subunit">
    <text evidence="6">Immunoglobulins are composed of two identical heavy chains and two identical light chains; disulfide-linked.</text>
</comment>
<comment type="subcellular location">
    <subcellularLocation>
        <location evidence="6 7">Secreted</location>
    </subcellularLocation>
    <subcellularLocation>
        <location evidence="6 7">Cell membrane</location>
    </subcellularLocation>
</comment>
<comment type="PTM">
    <text evidence="3">The N-terminus is blocked.</text>
</comment>
<comment type="polymorphism">
    <text evidence="10">There are several alleles. The sequence shown is that of IMGT allele IGHV3-48*03.</text>
</comment>
<comment type="caution">
    <text evidence="10">For examples of full-length immunoglobulin heavy chains (of different isotypes) see AC P0DOX2, AC P0DOX3, AC P0DOX4, AC P0DOX5 and AC P0DOX6.</text>
</comment>
<protein>
    <recommendedName>
        <fullName evidence="4 9">Immunoglobulin heavy variable 3-48</fullName>
    </recommendedName>
    <alternativeName>
        <fullName evidence="11">Ig heavy chain V-III region WEA</fullName>
    </alternativeName>
</protein>
<reference key="1">
    <citation type="journal article" date="2003" name="Nature">
        <title>The DNA sequence and analysis of human chromosome 14.</title>
        <authorList>
            <person name="Heilig R."/>
            <person name="Eckenberg R."/>
            <person name="Petit J.-L."/>
            <person name="Fonknechten N."/>
            <person name="Da Silva C."/>
            <person name="Cattolico L."/>
            <person name="Levy M."/>
            <person name="Barbe V."/>
            <person name="De Berardinis V."/>
            <person name="Ureta-Vidal A."/>
            <person name="Pelletier E."/>
            <person name="Vico V."/>
            <person name="Anthouard V."/>
            <person name="Rowen L."/>
            <person name="Madan A."/>
            <person name="Qin S."/>
            <person name="Sun H."/>
            <person name="Du H."/>
            <person name="Pepin K."/>
            <person name="Artiguenave F."/>
            <person name="Robert C."/>
            <person name="Cruaud C."/>
            <person name="Bruels T."/>
            <person name="Jaillon O."/>
            <person name="Friedlander L."/>
            <person name="Samson G."/>
            <person name="Brottier P."/>
            <person name="Cure S."/>
            <person name="Segurens B."/>
            <person name="Aniere F."/>
            <person name="Samain S."/>
            <person name="Crespeau H."/>
            <person name="Abbasi N."/>
            <person name="Aiach N."/>
            <person name="Boscus D."/>
            <person name="Dickhoff R."/>
            <person name="Dors M."/>
            <person name="Dubois I."/>
            <person name="Friedman C."/>
            <person name="Gouyvenoux M."/>
            <person name="James R."/>
            <person name="Madan A."/>
            <person name="Mairey-Estrada B."/>
            <person name="Mangenot S."/>
            <person name="Martins N."/>
            <person name="Menard M."/>
            <person name="Oztas S."/>
            <person name="Ratcliffe A."/>
            <person name="Shaffer T."/>
            <person name="Trask B."/>
            <person name="Vacherie B."/>
            <person name="Bellemere C."/>
            <person name="Belser C."/>
            <person name="Besnard-Gonnet M."/>
            <person name="Bartol-Mavel D."/>
            <person name="Boutard M."/>
            <person name="Briez-Silla S."/>
            <person name="Combette S."/>
            <person name="Dufosse-Laurent V."/>
            <person name="Ferron C."/>
            <person name="Lechaplais C."/>
            <person name="Louesse C."/>
            <person name="Muselet D."/>
            <person name="Magdelenat G."/>
            <person name="Pateau E."/>
            <person name="Petit E."/>
            <person name="Sirvain-Trukniewicz P."/>
            <person name="Trybou A."/>
            <person name="Vega-Czarny N."/>
            <person name="Bataille E."/>
            <person name="Bluet E."/>
            <person name="Bordelais I."/>
            <person name="Dubois M."/>
            <person name="Dumont C."/>
            <person name="Guerin T."/>
            <person name="Haffray S."/>
            <person name="Hammadi R."/>
            <person name="Muanga J."/>
            <person name="Pellouin V."/>
            <person name="Robert D."/>
            <person name="Wunderle E."/>
            <person name="Gauguet G."/>
            <person name="Roy A."/>
            <person name="Sainte-Marthe L."/>
            <person name="Verdier J."/>
            <person name="Verdier-Discala C."/>
            <person name="Hillier L.W."/>
            <person name="Fulton L."/>
            <person name="McPherson J."/>
            <person name="Matsuda F."/>
            <person name="Wilson R."/>
            <person name="Scarpelli C."/>
            <person name="Gyapay G."/>
            <person name="Wincker P."/>
            <person name="Saurin W."/>
            <person name="Quetier F."/>
            <person name="Waterston R."/>
            <person name="Hood L."/>
            <person name="Weissenbach J."/>
        </authorList>
    </citation>
    <scope>NUCLEOTIDE SEQUENCE [LARGE SCALE GENOMIC DNA] (IMGT ALLELE IGHV3-48*03)</scope>
</reference>
<reference key="2">
    <citation type="journal article" date="1983" name="Proc. Natl. Acad. Sci. U.S.A.">
        <title>Amino acid sequence of the Fv region of a human monoclonal IgM (protein WEA) with antibody activity against 3,4-pyruvylated galactose in Klebsiella polysaccharides K30 and K33.</title>
        <authorList>
            <person name="Goni F."/>
            <person name="Frangione B."/>
        </authorList>
    </citation>
    <scope>PROTEIN SEQUENCE OF 20-117</scope>
    <scope>BLOCKAGE OF N-TERMINUS</scope>
</reference>
<reference key="3">
    <citation type="journal article" date="2001" name="Exp. Clin. Immunogenet.">
        <title>Nomenclature of the human immunoglobulin heavy (IGH) genes.</title>
        <authorList>
            <person name="Lefranc M.P."/>
        </authorList>
    </citation>
    <scope>NOMENCLATURE</scope>
</reference>
<reference key="4">
    <citation type="book" date="2001" name="The Immunoglobulin FactsBook.">
        <title>The Immunoglobulin FactsBook.</title>
        <editorList>
            <person name="Lefranc M.P."/>
            <person name="Lefranc G."/>
        </editorList>
        <authorList>
            <person name="Lefranc M.P."/>
            <person name="Lefranc G."/>
        </authorList>
    </citation>
    <scope>NOMENCLATURE</scope>
</reference>
<reference key="5">
    <citation type="journal article" date="2007" name="Annu. Rev. Genet.">
        <title>Immunoglobulin somatic hypermutation.</title>
        <authorList>
            <person name="Teng G."/>
            <person name="Papavasiliou F.N."/>
        </authorList>
    </citation>
    <scope>REVIEW ON SOMATIC HYPERMUTATION</scope>
</reference>
<reference key="6">
    <citation type="journal article" date="2010" name="J. Allergy Clin. Immunol.">
        <title>Structure and function of immunoglobulins.</title>
        <authorList>
            <person name="Schroeder H.W. Jr."/>
            <person name="Cavacini L."/>
        </authorList>
    </citation>
    <scope>REVIEW ON IMMUNOGLOBULINS</scope>
</reference>
<reference key="7">
    <citation type="journal article" date="2012" name="Nat. Rev. Immunol.">
        <title>Molecular programming of B cell memory.</title>
        <authorList>
            <person name="McHeyzer-Williams M."/>
            <person name="Okitsu S."/>
            <person name="Wang N."/>
            <person name="McHeyzer-Williams L."/>
        </authorList>
    </citation>
    <scope>REVIEW ON FUNCTION</scope>
</reference>
<reference key="8">
    <citation type="journal article" date="2014" name="Front. Immunol.">
        <title>Immunoglobulin and T Cell Receptor Genes: IMGT((R)) and the Birth and Rise of Immunoinformatics.</title>
        <authorList>
            <person name="Lefranc M.P."/>
        </authorList>
    </citation>
    <scope>NOMENCLATURE</scope>
</reference>
<name>HV348_HUMAN</name>
<organism>
    <name type="scientific">Homo sapiens</name>
    <name type="common">Human</name>
    <dbReference type="NCBI Taxonomy" id="9606"/>
    <lineage>
        <taxon>Eukaryota</taxon>
        <taxon>Metazoa</taxon>
        <taxon>Chordata</taxon>
        <taxon>Craniata</taxon>
        <taxon>Vertebrata</taxon>
        <taxon>Euteleostomi</taxon>
        <taxon>Mammalia</taxon>
        <taxon>Eutheria</taxon>
        <taxon>Euarchontoglires</taxon>
        <taxon>Primates</taxon>
        <taxon>Haplorrhini</taxon>
        <taxon>Catarrhini</taxon>
        <taxon>Hominidae</taxon>
        <taxon>Homo</taxon>
    </lineage>
</organism>
<keyword id="KW-1064">Adaptive immunity</keyword>
<keyword id="KW-1003">Cell membrane</keyword>
<keyword id="KW-0903">Direct protein sequencing</keyword>
<keyword id="KW-1015">Disulfide bond</keyword>
<keyword id="KW-0391">Immunity</keyword>
<keyword id="KW-1280">Immunoglobulin</keyword>
<keyword id="KW-0393">Immunoglobulin domain</keyword>
<keyword id="KW-0472">Membrane</keyword>
<keyword id="KW-1267">Proteomics identification</keyword>
<keyword id="KW-1185">Reference proteome</keyword>
<keyword id="KW-0964">Secreted</keyword>
<keyword id="KW-0732">Signal</keyword>
<proteinExistence type="evidence at protein level"/>
<accession>P01763</accession>
<accession>A0A0C4DH37</accession>
<evidence type="ECO:0000250" key="1">
    <source>
        <dbReference type="UniProtKB" id="P23083"/>
    </source>
</evidence>
<evidence type="ECO:0000255" key="2">
    <source>
        <dbReference type="PROSITE-ProRule" id="PRU00114"/>
    </source>
</evidence>
<evidence type="ECO:0000269" key="3">
    <source>
    </source>
</evidence>
<evidence type="ECO:0000303" key="4">
    <source>
    </source>
</evidence>
<evidence type="ECO:0000303" key="5">
    <source>
    </source>
</evidence>
<evidence type="ECO:0000303" key="6">
    <source>
    </source>
</evidence>
<evidence type="ECO:0000303" key="7">
    <source>
    </source>
</evidence>
<evidence type="ECO:0000303" key="8">
    <source>
    </source>
</evidence>
<evidence type="ECO:0000303" key="9">
    <source ref="4"/>
</evidence>
<evidence type="ECO:0000305" key="10"/>
<evidence type="ECO:0000305" key="11">
    <source>
    </source>
</evidence>
<gene>
    <name evidence="4 9" type="primary">IGHV3-48</name>
</gene>
<sequence>MELGLCWVFLVAILEGVQCEVQLVESGGGLVQPGGSLRLSCAASGFTFSSYEMNWVRQAPGKGLEWVSYISSSGSTIYYADSVKGRFTISRDNAKNSLYLQMNSLRAEDTAVYYCAR</sequence>
<feature type="signal peptide" evidence="3">
    <location>
        <begin position="1"/>
        <end position="19"/>
    </location>
</feature>
<feature type="chain" id="PRO_0000059915" description="Immunoglobulin heavy variable 3-48" evidence="3">
    <location>
        <begin position="20"/>
        <end position="117"/>
    </location>
</feature>
<feature type="domain" description="Ig-like" evidence="2">
    <location>
        <begin position="20"/>
        <end position="117" status="greater than"/>
    </location>
</feature>
<feature type="region of interest" description="Framework-1" evidence="1">
    <location>
        <begin position="20"/>
        <end position="44"/>
    </location>
</feature>
<feature type="region of interest" description="Complementarity-determining-1" evidence="1">
    <location>
        <begin position="45"/>
        <end position="52"/>
    </location>
</feature>
<feature type="region of interest" description="Framework-2" evidence="1">
    <location>
        <begin position="53"/>
        <end position="69"/>
    </location>
</feature>
<feature type="region of interest" description="Complementarity-determining-2" evidence="1">
    <location>
        <begin position="70"/>
        <end position="77"/>
    </location>
</feature>
<feature type="region of interest" description="Framework-3" evidence="1">
    <location>
        <begin position="78"/>
        <end position="115"/>
    </location>
</feature>
<feature type="region of interest" description="Complementarity-determining-3" evidence="1">
    <location>
        <begin position="116"/>
        <end position="117" status="greater than"/>
    </location>
</feature>
<feature type="disulfide bond" evidence="2">
    <location>
        <begin position="41"/>
        <end position="115"/>
    </location>
</feature>
<feature type="sequence conflict" description="In Ref. 2; AA sequence." evidence="10" ref="2">
    <original>E</original>
    <variation>Q</variation>
    <location>
        <position position="20"/>
    </location>
</feature>
<feature type="sequence conflict" description="In Ref. 2; AA sequence." evidence="10" ref="2">
    <original>E</original>
    <variation>D</variation>
    <location>
        <position position="25"/>
    </location>
</feature>
<feature type="sequence conflict" description="In Ref. 2; AA sequence." evidence="10" ref="2">
    <original>Q</original>
    <variation>E</variation>
    <location>
        <position position="32"/>
    </location>
</feature>
<feature type="sequence conflict" description="In Ref. 2; AA sequence." evidence="10" ref="2">
    <original>A</original>
    <variation>S</variation>
    <location>
        <position position="42"/>
    </location>
</feature>
<feature type="sequence conflict" description="In Ref. 2; AA sequence." evidence="10" ref="2">
    <original>SYE</original>
    <variation>AND</variation>
    <location>
        <begin position="50"/>
        <end position="52"/>
    </location>
</feature>
<feature type="sequence conflict" description="In Ref. 2; AA sequence." evidence="10" ref="2">
    <original>VSYISS</original>
    <variation>LSFIGG</variation>
    <location>
        <begin position="67"/>
        <end position="72"/>
    </location>
</feature>
<feature type="sequence conflict" description="In Ref. 2; AA sequence." evidence="10" ref="2">
    <original>DNA</original>
    <variation>NBS</variation>
    <location>
        <begin position="92"/>
        <end position="94"/>
    </location>
</feature>
<feature type="sequence conflict" description="In Ref. 2; AA sequence." evidence="10" ref="2">
    <original>N</original>
    <variation>S</variation>
    <location>
        <position position="103"/>
    </location>
</feature>
<feature type="non-terminal residue">
    <location>
        <position position="117"/>
    </location>
</feature>
<dbReference type="EMBL" id="AC244452">
    <property type="status" value="NOT_ANNOTATED_CDS"/>
    <property type="molecule type" value="Genomic_DNA"/>
</dbReference>
<dbReference type="PIR" id="A02046">
    <property type="entry name" value="M3HUWE"/>
</dbReference>
<dbReference type="SMR" id="P01763"/>
<dbReference type="FunCoup" id="P01763">
    <property type="interactions" value="465"/>
</dbReference>
<dbReference type="IntAct" id="P01763">
    <property type="interactions" value="1"/>
</dbReference>
<dbReference type="IMGT_GENE-DB" id="IGHV3-48"/>
<dbReference type="BioMuta" id="IGHV3-48"/>
<dbReference type="DMDM" id="123842"/>
<dbReference type="jPOST" id="P01763"/>
<dbReference type="MassIVE" id="P01763"/>
<dbReference type="PRIDE" id="P01763"/>
<dbReference type="Pumba" id="P01763"/>
<dbReference type="Ensembl" id="ENST00000390624.3">
    <property type="protein sequence ID" value="ENSP00000375033.2"/>
    <property type="gene ID" value="ENSG00000211964.3"/>
</dbReference>
<dbReference type="Ensembl" id="ENST00000632296.1">
    <property type="protein sequence ID" value="ENSP00000487990.1"/>
    <property type="gene ID" value="ENSG00000282627.1"/>
</dbReference>
<dbReference type="AGR" id="HGNC:5606"/>
<dbReference type="GeneCards" id="IGHV3-48"/>
<dbReference type="HGNC" id="HGNC:5606">
    <property type="gene designation" value="IGHV3-48"/>
</dbReference>
<dbReference type="HPA" id="ENSG00000211964">
    <property type="expression patterns" value="Tissue enhanced (intestine, lymphoid tissue, stomach)"/>
</dbReference>
<dbReference type="neXtProt" id="NX_P01763"/>
<dbReference type="OpenTargets" id="ENSG00000211964"/>
<dbReference type="VEuPathDB" id="HostDB:ENSG00000211964"/>
<dbReference type="GeneTree" id="ENSGT01050000244871"/>
<dbReference type="InParanoid" id="P01763"/>
<dbReference type="OMA" id="RYICIRR"/>
<dbReference type="OrthoDB" id="9945861at2759"/>
<dbReference type="PAN-GO" id="P01763">
    <property type="GO annotations" value="11 GO annotations based on evolutionary models"/>
</dbReference>
<dbReference type="PhylomeDB" id="P01763"/>
<dbReference type="PathwayCommons" id="P01763"/>
<dbReference type="Reactome" id="R-HSA-166663">
    <property type="pathway name" value="Initial triggering of complement"/>
</dbReference>
<dbReference type="Reactome" id="R-HSA-173623">
    <property type="pathway name" value="Classical antibody-mediated complement activation"/>
</dbReference>
<dbReference type="Reactome" id="R-HSA-198933">
    <property type="pathway name" value="Immunoregulatory interactions between a Lymphoid and a non-Lymphoid cell"/>
</dbReference>
<dbReference type="Reactome" id="R-HSA-202733">
    <property type="pathway name" value="Cell surface interactions at the vascular wall"/>
</dbReference>
<dbReference type="Reactome" id="R-HSA-2029481">
    <property type="pathway name" value="FCGR activation"/>
</dbReference>
<dbReference type="Reactome" id="R-HSA-2029482">
    <property type="pathway name" value="Regulation of actin dynamics for phagocytic cup formation"/>
</dbReference>
<dbReference type="Reactome" id="R-HSA-2029485">
    <property type="pathway name" value="Role of phospholipids in phagocytosis"/>
</dbReference>
<dbReference type="Reactome" id="R-HSA-2168880">
    <property type="pathway name" value="Scavenging of heme from plasma"/>
</dbReference>
<dbReference type="Reactome" id="R-HSA-2454202">
    <property type="pathway name" value="Fc epsilon receptor (FCERI) signaling"/>
</dbReference>
<dbReference type="Reactome" id="R-HSA-2730905">
    <property type="pathway name" value="Role of LAT2/NTAL/LAB on calcium mobilization"/>
</dbReference>
<dbReference type="Reactome" id="R-HSA-2871796">
    <property type="pathway name" value="FCERI mediated MAPK activation"/>
</dbReference>
<dbReference type="Reactome" id="R-HSA-2871809">
    <property type="pathway name" value="FCERI mediated Ca+2 mobilization"/>
</dbReference>
<dbReference type="Reactome" id="R-HSA-2871837">
    <property type="pathway name" value="FCERI mediated NF-kB activation"/>
</dbReference>
<dbReference type="Reactome" id="R-HSA-5690714">
    <property type="pathway name" value="CD22 mediated BCR regulation"/>
</dbReference>
<dbReference type="Reactome" id="R-HSA-9664323">
    <property type="pathway name" value="FCGR3A-mediated IL10 synthesis"/>
</dbReference>
<dbReference type="Reactome" id="R-HSA-9664422">
    <property type="pathway name" value="FCGR3A-mediated phagocytosis"/>
</dbReference>
<dbReference type="Reactome" id="R-HSA-9679191">
    <property type="pathway name" value="Potential therapeutics for SARS"/>
</dbReference>
<dbReference type="Reactome" id="R-HSA-977606">
    <property type="pathway name" value="Regulation of Complement cascade"/>
</dbReference>
<dbReference type="Reactome" id="R-HSA-983695">
    <property type="pathway name" value="Antigen activates B Cell Receptor (BCR) leading to generation of second messengers"/>
</dbReference>
<dbReference type="SignaLink" id="P01763"/>
<dbReference type="Pharos" id="P01763">
    <property type="development level" value="Tdark"/>
</dbReference>
<dbReference type="PRO" id="PR:P01763"/>
<dbReference type="Proteomes" id="UP000005640">
    <property type="component" value="Chromosome 14"/>
</dbReference>
<dbReference type="RNAct" id="P01763">
    <property type="molecule type" value="protein"/>
</dbReference>
<dbReference type="Bgee" id="ENSG00000211964">
    <property type="expression patterns" value="Expressed in duodenum and 91 other cell types or tissues"/>
</dbReference>
<dbReference type="GO" id="GO:0005576">
    <property type="term" value="C:extracellular region"/>
    <property type="evidence" value="ECO:0000304"/>
    <property type="project" value="Reactome"/>
</dbReference>
<dbReference type="GO" id="GO:0019814">
    <property type="term" value="C:immunoglobulin complex"/>
    <property type="evidence" value="ECO:0007669"/>
    <property type="project" value="UniProtKB-KW"/>
</dbReference>
<dbReference type="GO" id="GO:0005886">
    <property type="term" value="C:plasma membrane"/>
    <property type="evidence" value="ECO:0000304"/>
    <property type="project" value="Reactome"/>
</dbReference>
<dbReference type="GO" id="GO:0003823">
    <property type="term" value="F:antigen binding"/>
    <property type="evidence" value="ECO:0000318"/>
    <property type="project" value="GO_Central"/>
</dbReference>
<dbReference type="GO" id="GO:0006955">
    <property type="term" value="P:immune response"/>
    <property type="evidence" value="ECO:0000303"/>
    <property type="project" value="UniProtKB"/>
</dbReference>
<dbReference type="GO" id="GO:0016064">
    <property type="term" value="P:immunoglobulin mediated immune response"/>
    <property type="evidence" value="ECO:0000318"/>
    <property type="project" value="GO_Central"/>
</dbReference>
<dbReference type="CDD" id="cd04981">
    <property type="entry name" value="IgV_H"/>
    <property type="match status" value="1"/>
</dbReference>
<dbReference type="FunFam" id="2.60.40.10:FF:000942">
    <property type="entry name" value="Immunoglobulin heavy variable 3-23"/>
    <property type="match status" value="1"/>
</dbReference>
<dbReference type="Gene3D" id="2.60.40.10">
    <property type="entry name" value="Immunoglobulins"/>
    <property type="match status" value="1"/>
</dbReference>
<dbReference type="InterPro" id="IPR007110">
    <property type="entry name" value="Ig-like_dom"/>
</dbReference>
<dbReference type="InterPro" id="IPR036179">
    <property type="entry name" value="Ig-like_dom_sf"/>
</dbReference>
<dbReference type="InterPro" id="IPR013783">
    <property type="entry name" value="Ig-like_fold"/>
</dbReference>
<dbReference type="InterPro" id="IPR013106">
    <property type="entry name" value="Ig_V-set"/>
</dbReference>
<dbReference type="InterPro" id="IPR050199">
    <property type="entry name" value="IgHV"/>
</dbReference>
<dbReference type="PANTHER" id="PTHR23266">
    <property type="entry name" value="IMMUNOGLOBULIN HEAVY CHAIN"/>
    <property type="match status" value="1"/>
</dbReference>
<dbReference type="Pfam" id="PF07686">
    <property type="entry name" value="V-set"/>
    <property type="match status" value="1"/>
</dbReference>
<dbReference type="SMART" id="SM00406">
    <property type="entry name" value="IGv"/>
    <property type="match status" value="1"/>
</dbReference>
<dbReference type="SUPFAM" id="SSF48726">
    <property type="entry name" value="Immunoglobulin"/>
    <property type="match status" value="1"/>
</dbReference>
<dbReference type="PROSITE" id="PS50835">
    <property type="entry name" value="IG_LIKE"/>
    <property type="match status" value="1"/>
</dbReference>